<evidence type="ECO:0000255" key="1">
    <source>
        <dbReference type="HAMAP-Rule" id="MF_01104"/>
    </source>
</evidence>
<proteinExistence type="inferred from homology"/>
<feature type="chain" id="PRO_1000065042" description="Protein Syd">
    <location>
        <begin position="1"/>
        <end position="181"/>
    </location>
</feature>
<keyword id="KW-0997">Cell inner membrane</keyword>
<keyword id="KW-1003">Cell membrane</keyword>
<keyword id="KW-0472">Membrane</keyword>
<organism>
    <name type="scientific">Klebsiella pneumoniae subsp. pneumoniae (strain ATCC 700721 / MGH 78578)</name>
    <dbReference type="NCBI Taxonomy" id="272620"/>
    <lineage>
        <taxon>Bacteria</taxon>
        <taxon>Pseudomonadati</taxon>
        <taxon>Pseudomonadota</taxon>
        <taxon>Gammaproteobacteria</taxon>
        <taxon>Enterobacterales</taxon>
        <taxon>Enterobacteriaceae</taxon>
        <taxon>Klebsiella/Raoultella group</taxon>
        <taxon>Klebsiella</taxon>
        <taxon>Klebsiella pneumoniae complex</taxon>
    </lineage>
</organism>
<comment type="function">
    <text evidence="1">Interacts with the SecY protein in vivo. May bind preferentially to an uncomplexed state of SecY, thus functioning either as a chelating agent for excess SecY in the cell or as a regulatory factor that negatively controls the translocase function.</text>
</comment>
<comment type="subcellular location">
    <subcellularLocation>
        <location evidence="1">Cell inner membrane</location>
        <topology evidence="1">Peripheral membrane protein</topology>
        <orientation evidence="1">Cytoplasmic side</orientation>
    </subcellularLocation>
    <text evidence="1">Loosely associated with the cytoplasmic side of the inner membrane, probably via SecY.</text>
</comment>
<comment type="similarity">
    <text evidence="1">Belongs to the Syd family.</text>
</comment>
<name>SYDP_KLEP7</name>
<reference key="1">
    <citation type="submission" date="2006-09" db="EMBL/GenBank/DDBJ databases">
        <authorList>
            <consortium name="The Klebsiella pneumonia Genome Sequencing Project"/>
            <person name="McClelland M."/>
            <person name="Sanderson E.K."/>
            <person name="Spieth J."/>
            <person name="Clifton W.S."/>
            <person name="Latreille P."/>
            <person name="Sabo A."/>
            <person name="Pepin K."/>
            <person name="Bhonagiri V."/>
            <person name="Porwollik S."/>
            <person name="Ali J."/>
            <person name="Wilson R.K."/>
        </authorList>
    </citation>
    <scope>NUCLEOTIDE SEQUENCE [LARGE SCALE GENOMIC DNA]</scope>
    <source>
        <strain>ATCC 700721 / MGH 78578</strain>
    </source>
</reference>
<sequence>MDHQTAEALRAFTQRYCAVWQQQRHSLPRSEELYGVPSPCVVDTQGEAVFWQPQPFSLAQNISAVERALDIVVQQPLHSYYTTQFAGDMSGRFAGETLTLLQTWSEEDFQRVQENLIGHLVVQKRLKLSPTLFIATLESELDVISVCNLSGEVVKETLGTAKRITLSPSLAGFLNHLEPVL</sequence>
<accession>A6TD66</accession>
<dbReference type="EMBL" id="CP000647">
    <property type="protein sequence ID" value="ABR78537.1"/>
    <property type="molecule type" value="Genomic_DNA"/>
</dbReference>
<dbReference type="RefSeq" id="WP_002915253.1">
    <property type="nucleotide sequence ID" value="NC_009648.1"/>
</dbReference>
<dbReference type="SMR" id="A6TD66"/>
<dbReference type="STRING" id="272620.KPN_03136"/>
<dbReference type="jPOST" id="A6TD66"/>
<dbReference type="PaxDb" id="272620-KPN_03136"/>
<dbReference type="EnsemblBacteria" id="ABR78537">
    <property type="protein sequence ID" value="ABR78537"/>
    <property type="gene ID" value="KPN_03136"/>
</dbReference>
<dbReference type="KEGG" id="kpn:KPN_03136"/>
<dbReference type="HOGENOM" id="CLU_121866_0_0_6"/>
<dbReference type="Proteomes" id="UP000000265">
    <property type="component" value="Chromosome"/>
</dbReference>
<dbReference type="GO" id="GO:0009898">
    <property type="term" value="C:cytoplasmic side of plasma membrane"/>
    <property type="evidence" value="ECO:0007669"/>
    <property type="project" value="InterPro"/>
</dbReference>
<dbReference type="CDD" id="cd16323">
    <property type="entry name" value="Syd"/>
    <property type="match status" value="1"/>
</dbReference>
<dbReference type="Gene3D" id="3.40.1580.20">
    <property type="entry name" value="Syd protein"/>
    <property type="match status" value="1"/>
</dbReference>
<dbReference type="HAMAP" id="MF_01104">
    <property type="entry name" value="Syd"/>
    <property type="match status" value="1"/>
</dbReference>
<dbReference type="InterPro" id="IPR009948">
    <property type="entry name" value="Syd"/>
</dbReference>
<dbReference type="InterPro" id="IPR038228">
    <property type="entry name" value="Syd_sf"/>
</dbReference>
<dbReference type="NCBIfam" id="NF003439">
    <property type="entry name" value="PRK04968.1"/>
    <property type="match status" value="1"/>
</dbReference>
<dbReference type="Pfam" id="PF07348">
    <property type="entry name" value="Syd"/>
    <property type="match status" value="1"/>
</dbReference>
<gene>
    <name evidence="1" type="primary">syd</name>
    <name type="ordered locus">KPN78578_30760</name>
    <name type="ORF">KPN_03136</name>
</gene>
<protein>
    <recommendedName>
        <fullName evidence="1">Protein Syd</fullName>
    </recommendedName>
</protein>